<protein>
    <recommendedName>
        <fullName evidence="1">ATP synthase subunit beta</fullName>
        <ecNumber evidence="1">7.1.2.2</ecNumber>
    </recommendedName>
    <alternativeName>
        <fullName evidence="1">ATP synthase F1 sector subunit beta</fullName>
    </alternativeName>
    <alternativeName>
        <fullName evidence="1">F-ATPase subunit beta</fullName>
    </alternativeName>
</protein>
<name>ATPB_SHEB5</name>
<keyword id="KW-0066">ATP synthesis</keyword>
<keyword id="KW-0067">ATP-binding</keyword>
<keyword id="KW-0997">Cell inner membrane</keyword>
<keyword id="KW-1003">Cell membrane</keyword>
<keyword id="KW-0139">CF(1)</keyword>
<keyword id="KW-0375">Hydrogen ion transport</keyword>
<keyword id="KW-0406">Ion transport</keyword>
<keyword id="KW-0472">Membrane</keyword>
<keyword id="KW-0547">Nucleotide-binding</keyword>
<keyword id="KW-1185">Reference proteome</keyword>
<keyword id="KW-1278">Translocase</keyword>
<keyword id="KW-0813">Transport</keyword>
<reference key="1">
    <citation type="submission" date="2007-02" db="EMBL/GenBank/DDBJ databases">
        <title>Complete sequence of chromosome of Shewanella baltica OS155.</title>
        <authorList>
            <consortium name="US DOE Joint Genome Institute"/>
            <person name="Copeland A."/>
            <person name="Lucas S."/>
            <person name="Lapidus A."/>
            <person name="Barry K."/>
            <person name="Detter J.C."/>
            <person name="Glavina del Rio T."/>
            <person name="Hammon N."/>
            <person name="Israni S."/>
            <person name="Dalin E."/>
            <person name="Tice H."/>
            <person name="Pitluck S."/>
            <person name="Sims D.R."/>
            <person name="Brettin T."/>
            <person name="Bruce D."/>
            <person name="Han C."/>
            <person name="Tapia R."/>
            <person name="Brainard J."/>
            <person name="Schmutz J."/>
            <person name="Larimer F."/>
            <person name="Land M."/>
            <person name="Hauser L."/>
            <person name="Kyrpides N."/>
            <person name="Mikhailova N."/>
            <person name="Brettar I."/>
            <person name="Klappenbach J."/>
            <person name="Konstantinidis K."/>
            <person name="Rodrigues J."/>
            <person name="Tiedje J."/>
            <person name="Richardson P."/>
        </authorList>
    </citation>
    <scope>NUCLEOTIDE SEQUENCE [LARGE SCALE GENOMIC DNA]</scope>
    <source>
        <strain>OS155 / ATCC BAA-1091</strain>
    </source>
</reference>
<sequence length="463" mass="49906">MSTGTVVQVIGAVVDVEFPQDAVPQVYDALKIVGEGPCNGLVLEVQQQLGGGVVRTIAMGSSDGLRRGLEVVNSGSPITVPVGTATLGRIMNVLGEPIDEAGPIGEEERYVIHRTAPSYEDQSSSTELLETGIKVIDLVCPFAKGGKVGLFGGAGVGKTVNMMELINNIAKAHSGLSVFAGVGERTREGNDFYYEMKDSGVLDKVAMVYGQMNEPPGNRLRVALSGLTMAEKFRDEGRDVLLFVDNIYRYTLAGTEVSALLGRMPSAVGYQPTLAEEMGVLQERITSTKTGSITSVQAVYVPADDLTDPSPATTFAHLDATVVLSRQIASLGIYPAVDPLDSTSRQLDPLVVGQEHYDVANGVQTVLQRYKELKDIIAILGMDELSDEDKTTVFRARKIERFLSQPFFVAEVFTGSPGKYVSLKDTIRGFKGILNGEFDHLPEQAFYMVGSIDEVIEKANKKK</sequence>
<proteinExistence type="inferred from homology"/>
<feature type="chain" id="PRO_1000055159" description="ATP synthase subunit beta">
    <location>
        <begin position="1"/>
        <end position="463"/>
    </location>
</feature>
<feature type="binding site" evidence="1">
    <location>
        <begin position="152"/>
        <end position="159"/>
    </location>
    <ligand>
        <name>ATP</name>
        <dbReference type="ChEBI" id="CHEBI:30616"/>
    </ligand>
</feature>
<evidence type="ECO:0000255" key="1">
    <source>
        <dbReference type="HAMAP-Rule" id="MF_01347"/>
    </source>
</evidence>
<dbReference type="EC" id="7.1.2.2" evidence="1"/>
<dbReference type="EMBL" id="CP000563">
    <property type="protein sequence ID" value="ABN63827.1"/>
    <property type="molecule type" value="Genomic_DNA"/>
</dbReference>
<dbReference type="RefSeq" id="WP_006083845.1">
    <property type="nucleotide sequence ID" value="NC_009052.1"/>
</dbReference>
<dbReference type="SMR" id="A3DAR4"/>
<dbReference type="STRING" id="325240.Sbal_4366"/>
<dbReference type="GeneID" id="11775069"/>
<dbReference type="KEGG" id="sbl:Sbal_4366"/>
<dbReference type="HOGENOM" id="CLU_022398_0_2_6"/>
<dbReference type="OrthoDB" id="9801639at2"/>
<dbReference type="Proteomes" id="UP000001557">
    <property type="component" value="Chromosome"/>
</dbReference>
<dbReference type="GO" id="GO:0005886">
    <property type="term" value="C:plasma membrane"/>
    <property type="evidence" value="ECO:0007669"/>
    <property type="project" value="UniProtKB-SubCell"/>
</dbReference>
<dbReference type="GO" id="GO:0045259">
    <property type="term" value="C:proton-transporting ATP synthase complex"/>
    <property type="evidence" value="ECO:0007669"/>
    <property type="project" value="UniProtKB-KW"/>
</dbReference>
<dbReference type="GO" id="GO:0005524">
    <property type="term" value="F:ATP binding"/>
    <property type="evidence" value="ECO:0007669"/>
    <property type="project" value="UniProtKB-UniRule"/>
</dbReference>
<dbReference type="GO" id="GO:0016887">
    <property type="term" value="F:ATP hydrolysis activity"/>
    <property type="evidence" value="ECO:0007669"/>
    <property type="project" value="InterPro"/>
</dbReference>
<dbReference type="GO" id="GO:0046933">
    <property type="term" value="F:proton-transporting ATP synthase activity, rotational mechanism"/>
    <property type="evidence" value="ECO:0007669"/>
    <property type="project" value="UniProtKB-UniRule"/>
</dbReference>
<dbReference type="CDD" id="cd18110">
    <property type="entry name" value="ATP-synt_F1_beta_C"/>
    <property type="match status" value="1"/>
</dbReference>
<dbReference type="CDD" id="cd18115">
    <property type="entry name" value="ATP-synt_F1_beta_N"/>
    <property type="match status" value="1"/>
</dbReference>
<dbReference type="CDD" id="cd01133">
    <property type="entry name" value="F1-ATPase_beta_CD"/>
    <property type="match status" value="1"/>
</dbReference>
<dbReference type="FunFam" id="1.10.1140.10:FF:000001">
    <property type="entry name" value="ATP synthase subunit beta"/>
    <property type="match status" value="1"/>
</dbReference>
<dbReference type="FunFam" id="2.40.10.170:FF:000003">
    <property type="entry name" value="ATP synthase subunit beta"/>
    <property type="match status" value="1"/>
</dbReference>
<dbReference type="FunFam" id="3.40.50.300:FF:000004">
    <property type="entry name" value="ATP synthase subunit beta"/>
    <property type="match status" value="1"/>
</dbReference>
<dbReference type="Gene3D" id="2.40.10.170">
    <property type="match status" value="1"/>
</dbReference>
<dbReference type="Gene3D" id="1.10.1140.10">
    <property type="entry name" value="Bovine Mitochondrial F1-atpase, Atp Synthase Beta Chain, Chain D, domain 3"/>
    <property type="match status" value="1"/>
</dbReference>
<dbReference type="Gene3D" id="3.40.50.300">
    <property type="entry name" value="P-loop containing nucleotide triphosphate hydrolases"/>
    <property type="match status" value="1"/>
</dbReference>
<dbReference type="HAMAP" id="MF_01347">
    <property type="entry name" value="ATP_synth_beta_bact"/>
    <property type="match status" value="1"/>
</dbReference>
<dbReference type="InterPro" id="IPR003593">
    <property type="entry name" value="AAA+_ATPase"/>
</dbReference>
<dbReference type="InterPro" id="IPR055190">
    <property type="entry name" value="ATP-synt_VA_C"/>
</dbReference>
<dbReference type="InterPro" id="IPR005722">
    <property type="entry name" value="ATP_synth_F1_bsu"/>
</dbReference>
<dbReference type="InterPro" id="IPR020003">
    <property type="entry name" value="ATPase_a/bsu_AS"/>
</dbReference>
<dbReference type="InterPro" id="IPR050053">
    <property type="entry name" value="ATPase_alpha/beta_chains"/>
</dbReference>
<dbReference type="InterPro" id="IPR004100">
    <property type="entry name" value="ATPase_F1/V1/A1_a/bsu_N"/>
</dbReference>
<dbReference type="InterPro" id="IPR036121">
    <property type="entry name" value="ATPase_F1/V1/A1_a/bsu_N_sf"/>
</dbReference>
<dbReference type="InterPro" id="IPR000194">
    <property type="entry name" value="ATPase_F1/V1/A1_a/bsu_nucl-bd"/>
</dbReference>
<dbReference type="InterPro" id="IPR024034">
    <property type="entry name" value="ATPase_F1/V1_b/a_C"/>
</dbReference>
<dbReference type="InterPro" id="IPR027417">
    <property type="entry name" value="P-loop_NTPase"/>
</dbReference>
<dbReference type="NCBIfam" id="TIGR01039">
    <property type="entry name" value="atpD"/>
    <property type="match status" value="1"/>
</dbReference>
<dbReference type="PANTHER" id="PTHR15184">
    <property type="entry name" value="ATP SYNTHASE"/>
    <property type="match status" value="1"/>
</dbReference>
<dbReference type="PANTHER" id="PTHR15184:SF71">
    <property type="entry name" value="ATP SYNTHASE SUBUNIT BETA, MITOCHONDRIAL"/>
    <property type="match status" value="1"/>
</dbReference>
<dbReference type="Pfam" id="PF00006">
    <property type="entry name" value="ATP-synt_ab"/>
    <property type="match status" value="1"/>
</dbReference>
<dbReference type="Pfam" id="PF02874">
    <property type="entry name" value="ATP-synt_ab_N"/>
    <property type="match status" value="1"/>
</dbReference>
<dbReference type="Pfam" id="PF22919">
    <property type="entry name" value="ATP-synt_VA_C"/>
    <property type="match status" value="1"/>
</dbReference>
<dbReference type="SMART" id="SM00382">
    <property type="entry name" value="AAA"/>
    <property type="match status" value="1"/>
</dbReference>
<dbReference type="SUPFAM" id="SSF47917">
    <property type="entry name" value="C-terminal domain of alpha and beta subunits of F1 ATP synthase"/>
    <property type="match status" value="1"/>
</dbReference>
<dbReference type="SUPFAM" id="SSF50615">
    <property type="entry name" value="N-terminal domain of alpha and beta subunits of F1 ATP synthase"/>
    <property type="match status" value="1"/>
</dbReference>
<dbReference type="SUPFAM" id="SSF52540">
    <property type="entry name" value="P-loop containing nucleoside triphosphate hydrolases"/>
    <property type="match status" value="1"/>
</dbReference>
<dbReference type="PROSITE" id="PS00152">
    <property type="entry name" value="ATPASE_ALPHA_BETA"/>
    <property type="match status" value="1"/>
</dbReference>
<accession>A3DAR4</accession>
<comment type="function">
    <text evidence="1">Produces ATP from ADP in the presence of a proton gradient across the membrane. The catalytic sites are hosted primarily by the beta subunits.</text>
</comment>
<comment type="catalytic activity">
    <reaction evidence="1">
        <text>ATP + H2O + 4 H(+)(in) = ADP + phosphate + 5 H(+)(out)</text>
        <dbReference type="Rhea" id="RHEA:57720"/>
        <dbReference type="ChEBI" id="CHEBI:15377"/>
        <dbReference type="ChEBI" id="CHEBI:15378"/>
        <dbReference type="ChEBI" id="CHEBI:30616"/>
        <dbReference type="ChEBI" id="CHEBI:43474"/>
        <dbReference type="ChEBI" id="CHEBI:456216"/>
        <dbReference type="EC" id="7.1.2.2"/>
    </reaction>
</comment>
<comment type="subunit">
    <text evidence="1">F-type ATPases have 2 components, CF(1) - the catalytic core - and CF(0) - the membrane proton channel. CF(1) has five subunits: alpha(3), beta(3), gamma(1), delta(1), epsilon(1). CF(0) has three main subunits: a(1), b(2) and c(9-12). The alpha and beta chains form an alternating ring which encloses part of the gamma chain. CF(1) is attached to CF(0) by a central stalk formed by the gamma and epsilon chains, while a peripheral stalk is formed by the delta and b chains.</text>
</comment>
<comment type="subcellular location">
    <subcellularLocation>
        <location evidence="1">Cell inner membrane</location>
        <topology evidence="1">Peripheral membrane protein</topology>
    </subcellularLocation>
</comment>
<comment type="similarity">
    <text evidence="1">Belongs to the ATPase alpha/beta chains family.</text>
</comment>
<gene>
    <name evidence="1" type="primary">atpD</name>
    <name type="ordered locus">Sbal_4366</name>
</gene>
<organism>
    <name type="scientific">Shewanella baltica (strain OS155 / ATCC BAA-1091)</name>
    <dbReference type="NCBI Taxonomy" id="325240"/>
    <lineage>
        <taxon>Bacteria</taxon>
        <taxon>Pseudomonadati</taxon>
        <taxon>Pseudomonadota</taxon>
        <taxon>Gammaproteobacteria</taxon>
        <taxon>Alteromonadales</taxon>
        <taxon>Shewanellaceae</taxon>
        <taxon>Shewanella</taxon>
    </lineage>
</organism>